<keyword id="KW-0039">Anion exchange</keyword>
<keyword id="KW-0050">Antiport</keyword>
<keyword id="KW-1003">Cell membrane</keyword>
<keyword id="KW-0325">Glycoprotein</keyword>
<keyword id="KW-0406">Ion transport</keyword>
<keyword id="KW-0449">Lipoprotein</keyword>
<keyword id="KW-0472">Membrane</keyword>
<keyword id="KW-0488">Methylation</keyword>
<keyword id="KW-0564">Palmitate</keyword>
<keyword id="KW-0597">Phosphoprotein</keyword>
<keyword id="KW-1185">Reference proteome</keyword>
<keyword id="KW-0812">Transmembrane</keyword>
<keyword id="KW-1133">Transmembrane helix</keyword>
<keyword id="KW-0813">Transport</keyword>
<protein>
    <recommendedName>
        <fullName>Anion exchange protein 2</fullName>
        <shortName>AE 2</shortName>
        <shortName>Anion exchanger 2</shortName>
    </recommendedName>
    <alternativeName>
        <fullName>Non-erythroid band 3-like protein</fullName>
    </alternativeName>
    <alternativeName>
        <fullName>Solute carrier family 4 member 2</fullName>
    </alternativeName>
</protein>
<name>B3A2_HORSE</name>
<comment type="function">
    <text evidence="3">Sodium-independent anion exchanger which mediates the electroneutral exchange of chloride for bicarbonate ions across the cell membrane (By similarity). Plays an important role in osteoclast differentiation and function (By similarity). Regulates bone resorption and calpain-dependent actin cytoskeleton organization in osteoclasts via anion exchange-dependent control of pH (By similarity). Essential for intracellular pH regulation in CD8(+) T-cells upon CD3 stimulation, modulating CD8(+) T-cell response (By similarity).</text>
</comment>
<comment type="catalytic activity">
    <reaction evidence="3">
        <text>hydrogencarbonate(in) + chloride(out) = hydrogencarbonate(out) + chloride(in)</text>
        <dbReference type="Rhea" id="RHEA:72363"/>
        <dbReference type="ChEBI" id="CHEBI:17544"/>
        <dbReference type="ChEBI" id="CHEBI:17996"/>
    </reaction>
</comment>
<comment type="subcellular location">
    <subcellularLocation>
        <location evidence="2">Apical cell membrane</location>
        <topology evidence="4">Multi-pass membrane protein</topology>
    </subcellularLocation>
    <subcellularLocation>
        <location evidence="2">Basolateral cell membrane</location>
        <topology evidence="4">Multi-pass membrane protein</topology>
    </subcellularLocation>
</comment>
<comment type="similarity">
    <text evidence="6">Belongs to the anion exchanger (TC 2.A.31) family.</text>
</comment>
<proteinExistence type="evidence at transcript level"/>
<reference key="1">
    <citation type="submission" date="2003-11" db="EMBL/GenBank/DDBJ databases">
        <title>Equine AE2 mRNA full transcript.</title>
        <authorList>
            <person name="Daly K."/>
            <person name="Nedjadi T."/>
            <person name="Shirazi-Beechey S.P."/>
        </authorList>
    </citation>
    <scope>NUCLEOTIDE SEQUENCE [MRNA]</scope>
</reference>
<accession>Q6SJP2</accession>
<sequence length="1237" mass="136357">MSSAPRRPASGADSFRTPEPEILGPATAGFPEQEEDELHRTLGVERFEEILQEAGSRGGEEPGRSYGEEDFEYHRQSSHHIHHPLSTHLPPDTRRRKTPQGPGRKSRRRPGASPTGETPTIEEGEEDEDEASEAEGARAPTQPSPASTPSSVQFFLQEDDGADRKAERTSPSPPPPLPHQEAAPRATKGAQTGALVEEVMAVAGGTAGGDDGGASGRPLTKAQPGHRSYNLQERRRIGSMTGAEQALLPRVPTDESEAQTLATADLDLMKSHRFEDVPGVRRHLVRKNAKGSVQSGREGREPGPTPRARPRAPHKPHEVFVELNELLLDKNQEPQWRETARWIKFEEDVEEETERWGKPHVASLSFRSLLELRRTLAHGAVLLDLDQQTLPGVAHQVVEQMVISDQIKAEDRADVLRALLLKHSHPSDEKDFSFPRNISAGSLGSLLGHHHGQGAESDPHVTEPLIGGVPETRLEVERERELSPPAPPAGITRSKSKHELKLLEKIPENAEATVVLVGCVEFLSRPTMAFVRLREAVELDAVLEVPVPVRFLFLLLGPSSANMDYHEIGRSISTLMSDKQFHEAAYLADEREDLLTAINAFLDCSVVLPPSEVQGEELLRSVAHFQRQMLKKREEQGRLLPTGAGLEPKSAQDKALLQMVEAAGAVEDDPLRRTGRPFGGLIRDVRRRYPHYLSDFRDALDPQCLAAVIFIYFAALSPAITFGGLLGEKTQDLIGVSELIMSTALQGVVFCLLGAQPLLVIGFSGPLLVFEEAFFSFCSSNDLEYLVGRVWIGFWLVLLALLMVALEGSFLVRFVSRFTQEIFAFLISLIFIYETFYKLVKIFQEHPLHGCSVSNSSEADSGDNATWAGTRVTLGLGNGSSAGPAGQGRPRGQPNTALLSLVLMAGTFFIAFFLRKFKNGRFFPGRVRRVIGDFGVPIAILIMVLVDYSIEDTYTQKLSVPSGFSVTAPEKRGWVINPLGEKSSFPVWMMVASLLPAILVFILIFMETQITTLIISKKERMLQKGSGFHLDLLLIVAMGGICALFGLPWLAAATVRSVTHANALTVMSKAVAPGDKPKIQEVKEQRVTGLLVALLVGLSIVIGDLLRQIPLAVLFGIFLYMGVTSLNGIQFYERLHLLLMPPKHHPDVTYVKKVRTLRMHLFTALQLLCLALLWAVMSTAASLAFPFILILTVPLRMVVLTRIFTEREMKCLDANEAEPVFDEREGVDEYNEMPMPV</sequence>
<dbReference type="EMBL" id="AY457176">
    <property type="protein sequence ID" value="AAR21623.1"/>
    <property type="molecule type" value="mRNA"/>
</dbReference>
<dbReference type="RefSeq" id="NP_001075235.1">
    <property type="nucleotide sequence ID" value="NM_001081766.1"/>
</dbReference>
<dbReference type="SMR" id="Q6SJP2"/>
<dbReference type="FunCoup" id="Q6SJP2">
    <property type="interactions" value="1649"/>
</dbReference>
<dbReference type="STRING" id="9796.ENSECAP00000051157"/>
<dbReference type="GlyCosmos" id="Q6SJP2">
    <property type="glycosylation" value="3 sites, No reported glycans"/>
</dbReference>
<dbReference type="PaxDb" id="9796-ENSECAP00000051157"/>
<dbReference type="GeneID" id="791243"/>
<dbReference type="KEGG" id="ecb:791243"/>
<dbReference type="CTD" id="6522"/>
<dbReference type="InParanoid" id="Q6SJP2"/>
<dbReference type="OrthoDB" id="1735926at2759"/>
<dbReference type="Proteomes" id="UP000002281">
    <property type="component" value="Unplaced"/>
</dbReference>
<dbReference type="GO" id="GO:0016324">
    <property type="term" value="C:apical plasma membrane"/>
    <property type="evidence" value="ECO:0000318"/>
    <property type="project" value="GO_Central"/>
</dbReference>
<dbReference type="GO" id="GO:0016323">
    <property type="term" value="C:basolateral plasma membrane"/>
    <property type="evidence" value="ECO:0000250"/>
    <property type="project" value="UniProtKB"/>
</dbReference>
<dbReference type="GO" id="GO:0005886">
    <property type="term" value="C:plasma membrane"/>
    <property type="evidence" value="ECO:0000318"/>
    <property type="project" value="GO_Central"/>
</dbReference>
<dbReference type="GO" id="GO:0140900">
    <property type="term" value="F:chloride:bicarbonate antiporter activity"/>
    <property type="evidence" value="ECO:0000250"/>
    <property type="project" value="UniProtKB"/>
</dbReference>
<dbReference type="GO" id="GO:0015701">
    <property type="term" value="P:bicarbonate transport"/>
    <property type="evidence" value="ECO:0000318"/>
    <property type="project" value="GO_Central"/>
</dbReference>
<dbReference type="GO" id="GO:0043377">
    <property type="term" value="P:negative regulation of CD8-positive, alpha-beta T cell differentiation"/>
    <property type="evidence" value="ECO:0000250"/>
    <property type="project" value="UniProtKB"/>
</dbReference>
<dbReference type="GO" id="GO:2000565">
    <property type="term" value="P:negative regulation of CD8-positive, alpha-beta T cell proliferation"/>
    <property type="evidence" value="ECO:0000250"/>
    <property type="project" value="UniProtKB"/>
</dbReference>
<dbReference type="GO" id="GO:0030316">
    <property type="term" value="P:osteoclast differentiation"/>
    <property type="evidence" value="ECO:0000250"/>
    <property type="project" value="UniProtKB"/>
</dbReference>
<dbReference type="GO" id="GO:0032956">
    <property type="term" value="P:regulation of actin cytoskeleton organization"/>
    <property type="evidence" value="ECO:0000250"/>
    <property type="project" value="UniProtKB"/>
</dbReference>
<dbReference type="GO" id="GO:0045124">
    <property type="term" value="P:regulation of bone resorption"/>
    <property type="evidence" value="ECO:0000250"/>
    <property type="project" value="UniProtKB"/>
</dbReference>
<dbReference type="GO" id="GO:0051453">
    <property type="term" value="P:regulation of intracellular pH"/>
    <property type="evidence" value="ECO:0000318"/>
    <property type="project" value="GO_Central"/>
</dbReference>
<dbReference type="GO" id="GO:0055085">
    <property type="term" value="P:transmembrane transport"/>
    <property type="evidence" value="ECO:0000318"/>
    <property type="project" value="GO_Central"/>
</dbReference>
<dbReference type="FunFam" id="1.10.287.570:FF:000001">
    <property type="entry name" value="Anion exchange protein"/>
    <property type="match status" value="1"/>
</dbReference>
<dbReference type="FunFam" id="3.40.930.10:FF:000004">
    <property type="entry name" value="Anion exchange protein"/>
    <property type="match status" value="1"/>
</dbReference>
<dbReference type="Gene3D" id="1.10.287.570">
    <property type="entry name" value="Helical hairpin bin"/>
    <property type="match status" value="1"/>
</dbReference>
<dbReference type="Gene3D" id="3.40.930.10">
    <property type="entry name" value="Mannitol-specific EII, Chain A"/>
    <property type="match status" value="1"/>
</dbReference>
<dbReference type="InterPro" id="IPR001717">
    <property type="entry name" value="Anion_exchange"/>
</dbReference>
<dbReference type="InterPro" id="IPR002978">
    <property type="entry name" value="Anion_exchange_2"/>
</dbReference>
<dbReference type="InterPro" id="IPR018241">
    <property type="entry name" value="Anion_exchange_CS"/>
</dbReference>
<dbReference type="InterPro" id="IPR013769">
    <property type="entry name" value="Band3_cytoplasmic_dom"/>
</dbReference>
<dbReference type="InterPro" id="IPR011531">
    <property type="entry name" value="HCO3_transpt-like_TM_dom"/>
</dbReference>
<dbReference type="InterPro" id="IPR003020">
    <property type="entry name" value="HCO3_transpt_euk"/>
</dbReference>
<dbReference type="InterPro" id="IPR016152">
    <property type="entry name" value="PTrfase/Anion_transptr"/>
</dbReference>
<dbReference type="NCBIfam" id="TIGR00834">
    <property type="entry name" value="ae"/>
    <property type="match status" value="1"/>
</dbReference>
<dbReference type="PANTHER" id="PTHR11453">
    <property type="entry name" value="ANION EXCHANGE PROTEIN"/>
    <property type="match status" value="1"/>
</dbReference>
<dbReference type="PANTHER" id="PTHR11453:SF14">
    <property type="entry name" value="ANION EXCHANGE PROTEIN 2"/>
    <property type="match status" value="1"/>
</dbReference>
<dbReference type="Pfam" id="PF07565">
    <property type="entry name" value="Band_3_cyto"/>
    <property type="match status" value="1"/>
</dbReference>
<dbReference type="Pfam" id="PF00955">
    <property type="entry name" value="HCO3_cotransp"/>
    <property type="match status" value="1"/>
</dbReference>
<dbReference type="PRINTS" id="PR00165">
    <property type="entry name" value="ANIONEXCHNGR"/>
</dbReference>
<dbReference type="PRINTS" id="PR01188">
    <property type="entry name" value="ANIONEXHNGR2"/>
</dbReference>
<dbReference type="PRINTS" id="PR01231">
    <property type="entry name" value="HCO3TRNSPORT"/>
</dbReference>
<dbReference type="SUPFAM" id="SSF55804">
    <property type="entry name" value="Phoshotransferase/anion transport protein"/>
    <property type="match status" value="1"/>
</dbReference>
<dbReference type="PROSITE" id="PS00219">
    <property type="entry name" value="ANION_EXCHANGER_1"/>
    <property type="match status" value="1"/>
</dbReference>
<dbReference type="PROSITE" id="PS00220">
    <property type="entry name" value="ANION_EXCHANGER_2"/>
    <property type="match status" value="1"/>
</dbReference>
<feature type="chain" id="PRO_0000354091" description="Anion exchange protein 2">
    <location>
        <begin position="1"/>
        <end position="1237"/>
    </location>
</feature>
<feature type="topological domain" description="Cytoplasmic" evidence="4">
    <location>
        <begin position="1"/>
        <end position="704"/>
    </location>
</feature>
<feature type="transmembrane region" description="Helical" evidence="4">
    <location>
        <begin position="705"/>
        <end position="725"/>
    </location>
</feature>
<feature type="transmembrane region" description="Helical" evidence="4">
    <location>
        <begin position="750"/>
        <end position="770"/>
    </location>
</feature>
<feature type="transmembrane region" description="Helical" evidence="4">
    <location>
        <begin position="792"/>
        <end position="812"/>
    </location>
</feature>
<feature type="transmembrane region" description="Helical" evidence="4">
    <location>
        <begin position="822"/>
        <end position="842"/>
    </location>
</feature>
<feature type="topological domain" description="Extracellular" evidence="4">
    <location>
        <begin position="843"/>
        <end position="893"/>
    </location>
</feature>
<feature type="transmembrane region" description="Helical" evidence="4">
    <location>
        <begin position="894"/>
        <end position="914"/>
    </location>
</feature>
<feature type="topological domain" description="Cytoplasmic" evidence="4">
    <location>
        <begin position="915"/>
        <end position="929"/>
    </location>
</feature>
<feature type="transmembrane region" description="Helical" evidence="4">
    <location>
        <begin position="930"/>
        <end position="950"/>
    </location>
</feature>
<feature type="transmembrane region" description="Helical" evidence="4">
    <location>
        <begin position="985"/>
        <end position="1005"/>
    </location>
</feature>
<feature type="transmembrane region" description="Helical" evidence="4">
    <location>
        <begin position="1032"/>
        <end position="1052"/>
    </location>
</feature>
<feature type="transmembrane region" description="Helical" evidence="4">
    <location>
        <begin position="1086"/>
        <end position="1106"/>
    </location>
</feature>
<feature type="transmembrane region" description="Helical" evidence="4">
    <location>
        <begin position="1109"/>
        <end position="1129"/>
    </location>
</feature>
<feature type="transmembrane region" description="Helical" evidence="4">
    <location>
        <begin position="1170"/>
        <end position="1190"/>
    </location>
</feature>
<feature type="region of interest" description="Disordered" evidence="5">
    <location>
        <begin position="1"/>
        <end position="237"/>
    </location>
</feature>
<feature type="region of interest" description="Disordered" evidence="5">
    <location>
        <begin position="286"/>
        <end position="316"/>
    </location>
</feature>
<feature type="region of interest" description="Disordered" evidence="5">
    <location>
        <begin position="445"/>
        <end position="466"/>
    </location>
</feature>
<feature type="region of interest" description="Membrane (anion exchange)">
    <location>
        <begin position="704"/>
        <end position="1237"/>
    </location>
</feature>
<feature type="compositionally biased region" description="Basic and acidic residues" evidence="5">
    <location>
        <begin position="37"/>
        <end position="49"/>
    </location>
</feature>
<feature type="compositionally biased region" description="Basic and acidic residues" evidence="5">
    <location>
        <begin position="58"/>
        <end position="75"/>
    </location>
</feature>
<feature type="compositionally biased region" description="Basic residues" evidence="5">
    <location>
        <begin position="76"/>
        <end position="85"/>
    </location>
</feature>
<feature type="compositionally biased region" description="Basic residues" evidence="5">
    <location>
        <begin position="94"/>
        <end position="110"/>
    </location>
</feature>
<feature type="compositionally biased region" description="Acidic residues" evidence="5">
    <location>
        <begin position="120"/>
        <end position="133"/>
    </location>
</feature>
<feature type="compositionally biased region" description="Low complexity" evidence="5">
    <location>
        <begin position="137"/>
        <end position="151"/>
    </location>
</feature>
<feature type="compositionally biased region" description="Gly residues" evidence="5">
    <location>
        <begin position="205"/>
        <end position="215"/>
    </location>
</feature>
<feature type="modified residue" description="Phosphoserine" evidence="2">
    <location>
        <position position="113"/>
    </location>
</feature>
<feature type="modified residue" description="Phosphoserine" evidence="2">
    <location>
        <position position="132"/>
    </location>
</feature>
<feature type="modified residue" description="Phosphoserine" evidence="2">
    <location>
        <position position="144"/>
    </location>
</feature>
<feature type="modified residue" description="Phosphoserine" evidence="3">
    <location>
        <position position="170"/>
    </location>
</feature>
<feature type="modified residue" description="Phosphoserine" evidence="3">
    <location>
        <position position="172"/>
    </location>
</feature>
<feature type="modified residue" description="Phosphoserine" evidence="2">
    <location>
        <position position="239"/>
    </location>
</feature>
<feature type="modified residue" description="Phosphothreonine" evidence="3">
    <location>
        <position position="253"/>
    </location>
</feature>
<feature type="modified residue" description="N6-methyllysine" evidence="2">
    <location>
        <position position="270"/>
    </location>
</feature>
<feature type="modified residue" description="Phosphoserine" evidence="2">
    <location>
        <position position="439"/>
    </location>
</feature>
<feature type="lipid moiety-binding region" description="S-palmitoyl cysteine" evidence="1">
    <location>
        <position position="1169"/>
    </location>
</feature>
<feature type="glycosylation site" description="N-linked (GlcNAc...) asparagine" evidence="4">
    <location>
        <position position="855"/>
    </location>
</feature>
<feature type="glycosylation site" description="N-linked (GlcNAc...) asparagine" evidence="4">
    <location>
        <position position="864"/>
    </location>
</feature>
<feature type="glycosylation site" description="N-linked (GlcNAc...) asparagine" evidence="4">
    <location>
        <position position="878"/>
    </location>
</feature>
<organism>
    <name type="scientific">Equus caballus</name>
    <name type="common">Horse</name>
    <dbReference type="NCBI Taxonomy" id="9796"/>
    <lineage>
        <taxon>Eukaryota</taxon>
        <taxon>Metazoa</taxon>
        <taxon>Chordata</taxon>
        <taxon>Craniata</taxon>
        <taxon>Vertebrata</taxon>
        <taxon>Euteleostomi</taxon>
        <taxon>Mammalia</taxon>
        <taxon>Eutheria</taxon>
        <taxon>Laurasiatheria</taxon>
        <taxon>Perissodactyla</taxon>
        <taxon>Equidae</taxon>
        <taxon>Equus</taxon>
    </lineage>
</organism>
<gene>
    <name type="primary">SLC4A2</name>
    <name type="synonym">AE2</name>
</gene>
<evidence type="ECO:0000250" key="1"/>
<evidence type="ECO:0000250" key="2">
    <source>
        <dbReference type="UniProtKB" id="P04920"/>
    </source>
</evidence>
<evidence type="ECO:0000250" key="3">
    <source>
        <dbReference type="UniProtKB" id="P13808"/>
    </source>
</evidence>
<evidence type="ECO:0000255" key="4"/>
<evidence type="ECO:0000256" key="5">
    <source>
        <dbReference type="SAM" id="MobiDB-lite"/>
    </source>
</evidence>
<evidence type="ECO:0000305" key="6"/>